<feature type="chain" id="PRO_0000164392" description="Nucleotidase CA_C3379">
    <location>
        <begin position="1"/>
        <end position="192"/>
    </location>
</feature>
<proteinExistence type="evidence at protein level"/>
<evidence type="ECO:0000269" key="1">
    <source>
    </source>
</evidence>
<evidence type="ECO:0000305" key="2"/>
<evidence type="ECO:0000305" key="3">
    <source>
    </source>
</evidence>
<accession>Q97DU2</accession>
<name>Y3379_CLOAB</name>
<protein>
    <recommendedName>
        <fullName evidence="3">Nucleotidase CA_C3379</fullName>
        <ecNumber evidence="3">3.1.3.-</ecNumber>
    </recommendedName>
    <alternativeName>
        <fullName evidence="3">Sugar phosphatase</fullName>
        <ecNumber evidence="1">3.1.3.23</ecNumber>
    </alternativeName>
</protein>
<organism>
    <name type="scientific">Clostridium acetobutylicum (strain ATCC 824 / DSM 792 / JCM 1419 / IAM 19013 / LMG 5710 / NBRC 13948 / NRRL B-527 / VKM B-1787 / 2291 / W)</name>
    <dbReference type="NCBI Taxonomy" id="272562"/>
    <lineage>
        <taxon>Bacteria</taxon>
        <taxon>Bacillati</taxon>
        <taxon>Bacillota</taxon>
        <taxon>Clostridia</taxon>
        <taxon>Eubacteriales</taxon>
        <taxon>Clostridiaceae</taxon>
        <taxon>Clostridium</taxon>
    </lineage>
</organism>
<comment type="function">
    <text evidence="1">Catalyzes the dephosphorylation of nucleotide monophosphates and of different sugar phosphates in vitro.</text>
</comment>
<comment type="catalytic activity">
    <reaction evidence="1">
        <text>sugar phosphate + H2O = sugar + phosphate.</text>
        <dbReference type="EC" id="3.1.3.23"/>
    </reaction>
</comment>
<comment type="cofactor">
    <cofactor evidence="1">
        <name>Mg(2+)</name>
        <dbReference type="ChEBI" id="CHEBI:18420"/>
    </cofactor>
</comment>
<comment type="similarity">
    <text evidence="2">Belongs to the 5'(3')-deoxyribonucleotidase family.</text>
</comment>
<dbReference type="EC" id="3.1.3.-" evidence="3"/>
<dbReference type="EC" id="3.1.3.23" evidence="1"/>
<dbReference type="EMBL" id="AE001437">
    <property type="protein sequence ID" value="AAK81310.1"/>
    <property type="molecule type" value="Genomic_DNA"/>
</dbReference>
<dbReference type="PIR" id="C97315">
    <property type="entry name" value="C97315"/>
</dbReference>
<dbReference type="RefSeq" id="NP_349970.1">
    <property type="nucleotide sequence ID" value="NC_003030.1"/>
</dbReference>
<dbReference type="RefSeq" id="WP_010966650.1">
    <property type="nucleotide sequence ID" value="NC_003030.1"/>
</dbReference>
<dbReference type="SMR" id="Q97DU2"/>
<dbReference type="STRING" id="272562.CA_C3379"/>
<dbReference type="DNASU" id="1119561"/>
<dbReference type="KEGG" id="cac:CA_C3379"/>
<dbReference type="PATRIC" id="fig|272562.8.peg.3560"/>
<dbReference type="eggNOG" id="COG5663">
    <property type="taxonomic scope" value="Bacteria"/>
</dbReference>
<dbReference type="HOGENOM" id="CLU_118515_0_0_9"/>
<dbReference type="OrthoDB" id="2471595at2"/>
<dbReference type="Proteomes" id="UP000000814">
    <property type="component" value="Chromosome"/>
</dbReference>
<dbReference type="GO" id="GO:0046872">
    <property type="term" value="F:metal ion binding"/>
    <property type="evidence" value="ECO:0007669"/>
    <property type="project" value="UniProtKB-KW"/>
</dbReference>
<dbReference type="GO" id="GO:0050308">
    <property type="term" value="F:sugar-phosphatase activity"/>
    <property type="evidence" value="ECO:0007669"/>
    <property type="project" value="UniProtKB-EC"/>
</dbReference>
<dbReference type="Gene3D" id="3.40.50.1000">
    <property type="entry name" value="HAD superfamily/HAD-like"/>
    <property type="match status" value="1"/>
</dbReference>
<dbReference type="InterPro" id="IPR052419">
    <property type="entry name" value="5_3-deoxyribonucleotidase-like"/>
</dbReference>
<dbReference type="InterPro" id="IPR036412">
    <property type="entry name" value="HAD-like_sf"/>
</dbReference>
<dbReference type="InterPro" id="IPR023214">
    <property type="entry name" value="HAD_sf"/>
</dbReference>
<dbReference type="InterPro" id="IPR009206">
    <property type="entry name" value="Nucleotidase_putative"/>
</dbReference>
<dbReference type="PANTHER" id="PTHR35134">
    <property type="entry name" value="NUCLEOTIDASE YQFW-RELATED"/>
    <property type="match status" value="1"/>
</dbReference>
<dbReference type="PANTHER" id="PTHR35134:SF2">
    <property type="entry name" value="NUCLEOTIDASE YQFW-RELATED"/>
    <property type="match status" value="1"/>
</dbReference>
<dbReference type="PIRSF" id="PIRSF021362">
    <property type="entry name" value="UCP021362_HAD"/>
    <property type="match status" value="1"/>
</dbReference>
<dbReference type="SUPFAM" id="SSF56784">
    <property type="entry name" value="HAD-like"/>
    <property type="match status" value="1"/>
</dbReference>
<gene>
    <name type="ordered locus">CA_C3379</name>
</gene>
<sequence>MEQLNICIDIDGTITDAYYWIDLCNSYFKTSITEKDATQYYIHKILNVPLEEYNEFYEKYKYKLHSEQKLRKDVKSVITKLSQNNNIFFVTARERDLTILTYSYLRKKEIPYDSLFILGTHHKVPTARQLNCDLFIEDNYDNALELSKAGFKVLLIDTYYNRKPLNQNIIRFYNWDEVYGIVDRLFEKSEAI</sequence>
<keyword id="KW-0378">Hydrolase</keyword>
<keyword id="KW-0460">Magnesium</keyword>
<keyword id="KW-0479">Metal-binding</keyword>
<keyword id="KW-1185">Reference proteome</keyword>
<reference key="1">
    <citation type="journal article" date="2001" name="J. Bacteriol.">
        <title>Genome sequence and comparative analysis of the solvent-producing bacterium Clostridium acetobutylicum.</title>
        <authorList>
            <person name="Noelling J."/>
            <person name="Breton G."/>
            <person name="Omelchenko M.V."/>
            <person name="Makarova K.S."/>
            <person name="Zeng Q."/>
            <person name="Gibson R."/>
            <person name="Lee H.M."/>
            <person name="Dubois J."/>
            <person name="Qiu D."/>
            <person name="Hitti J."/>
            <person name="Wolf Y.I."/>
            <person name="Tatusov R.L."/>
            <person name="Sabathe F."/>
            <person name="Doucette-Stamm L.A."/>
            <person name="Soucaille P."/>
            <person name="Daly M.J."/>
            <person name="Bennett G.N."/>
            <person name="Koonin E.V."/>
            <person name="Smith D.R."/>
        </authorList>
    </citation>
    <scope>NUCLEOTIDE SEQUENCE [LARGE SCALE GENOMIC DNA]</scope>
    <source>
        <strain>ATCC 824 / DSM 792 / JCM 1419 / IAM 19013 / LMG 5710 / NBRC 13948 / NRRL B-527 / VKM B-1787 / 2291 / W</strain>
    </source>
</reference>
<reference key="2">
    <citation type="journal article" date="2015" name="Proc. Natl. Acad. Sci. U.S.A.">
        <title>Panoramic view of a superfamily of phosphatases through substrate profiling.</title>
        <authorList>
            <person name="Huang H."/>
            <person name="Pandya C."/>
            <person name="Liu C."/>
            <person name="Al-Obaidi N.F."/>
            <person name="Wang M."/>
            <person name="Zheng L."/>
            <person name="Toews Keating S."/>
            <person name="Aono M."/>
            <person name="Love J.D."/>
            <person name="Evans B."/>
            <person name="Seidel R.D."/>
            <person name="Hillerich B.S."/>
            <person name="Garforth S.J."/>
            <person name="Almo S.C."/>
            <person name="Mariano P.S."/>
            <person name="Dunaway-Mariano D."/>
            <person name="Allen K.N."/>
            <person name="Farelli J.D."/>
        </authorList>
    </citation>
    <scope>FUNCTION</scope>
    <scope>CATALYTIC ACTIVITY</scope>
    <scope>COFACTOR</scope>
</reference>